<evidence type="ECO:0000255" key="1">
    <source>
        <dbReference type="HAMAP-Rule" id="MF_00303"/>
    </source>
</evidence>
<dbReference type="EC" id="5.2.1.8" evidence="1"/>
<dbReference type="EMBL" id="CP000447">
    <property type="protein sequence ID" value="ABI72438.1"/>
    <property type="molecule type" value="Genomic_DNA"/>
</dbReference>
<dbReference type="RefSeq" id="WP_011638047.1">
    <property type="nucleotide sequence ID" value="NC_008345.1"/>
</dbReference>
<dbReference type="SMR" id="Q07ZX7"/>
<dbReference type="STRING" id="318167.Sfri_2597"/>
<dbReference type="KEGG" id="sfr:Sfri_2597"/>
<dbReference type="eggNOG" id="COG0544">
    <property type="taxonomic scope" value="Bacteria"/>
</dbReference>
<dbReference type="HOGENOM" id="CLU_033058_2_0_6"/>
<dbReference type="OrthoDB" id="9767721at2"/>
<dbReference type="Proteomes" id="UP000000684">
    <property type="component" value="Chromosome"/>
</dbReference>
<dbReference type="GO" id="GO:0005737">
    <property type="term" value="C:cytoplasm"/>
    <property type="evidence" value="ECO:0007669"/>
    <property type="project" value="UniProtKB-SubCell"/>
</dbReference>
<dbReference type="GO" id="GO:0003755">
    <property type="term" value="F:peptidyl-prolyl cis-trans isomerase activity"/>
    <property type="evidence" value="ECO:0007669"/>
    <property type="project" value="UniProtKB-UniRule"/>
</dbReference>
<dbReference type="GO" id="GO:0044183">
    <property type="term" value="F:protein folding chaperone"/>
    <property type="evidence" value="ECO:0007669"/>
    <property type="project" value="TreeGrafter"/>
</dbReference>
<dbReference type="GO" id="GO:0043022">
    <property type="term" value="F:ribosome binding"/>
    <property type="evidence" value="ECO:0007669"/>
    <property type="project" value="TreeGrafter"/>
</dbReference>
<dbReference type="GO" id="GO:0051083">
    <property type="term" value="P:'de novo' cotranslational protein folding"/>
    <property type="evidence" value="ECO:0007669"/>
    <property type="project" value="TreeGrafter"/>
</dbReference>
<dbReference type="GO" id="GO:0051301">
    <property type="term" value="P:cell division"/>
    <property type="evidence" value="ECO:0007669"/>
    <property type="project" value="UniProtKB-KW"/>
</dbReference>
<dbReference type="GO" id="GO:0061077">
    <property type="term" value="P:chaperone-mediated protein folding"/>
    <property type="evidence" value="ECO:0007669"/>
    <property type="project" value="TreeGrafter"/>
</dbReference>
<dbReference type="GO" id="GO:0015031">
    <property type="term" value="P:protein transport"/>
    <property type="evidence" value="ECO:0007669"/>
    <property type="project" value="UniProtKB-UniRule"/>
</dbReference>
<dbReference type="GO" id="GO:0043335">
    <property type="term" value="P:protein unfolding"/>
    <property type="evidence" value="ECO:0007669"/>
    <property type="project" value="TreeGrafter"/>
</dbReference>
<dbReference type="FunFam" id="3.10.50.40:FF:000001">
    <property type="entry name" value="Trigger factor"/>
    <property type="match status" value="1"/>
</dbReference>
<dbReference type="Gene3D" id="3.10.50.40">
    <property type="match status" value="1"/>
</dbReference>
<dbReference type="Gene3D" id="3.30.70.1050">
    <property type="entry name" value="Trigger factor ribosome-binding domain"/>
    <property type="match status" value="1"/>
</dbReference>
<dbReference type="Gene3D" id="1.10.3120.10">
    <property type="entry name" value="Trigger factor, C-terminal domain"/>
    <property type="match status" value="1"/>
</dbReference>
<dbReference type="HAMAP" id="MF_00303">
    <property type="entry name" value="Trigger_factor_Tig"/>
    <property type="match status" value="1"/>
</dbReference>
<dbReference type="InterPro" id="IPR046357">
    <property type="entry name" value="PPIase_dom_sf"/>
</dbReference>
<dbReference type="InterPro" id="IPR001179">
    <property type="entry name" value="PPIase_FKBP_dom"/>
</dbReference>
<dbReference type="InterPro" id="IPR005215">
    <property type="entry name" value="Trig_fac"/>
</dbReference>
<dbReference type="InterPro" id="IPR008880">
    <property type="entry name" value="Trigger_fac_C"/>
</dbReference>
<dbReference type="InterPro" id="IPR037041">
    <property type="entry name" value="Trigger_fac_C_sf"/>
</dbReference>
<dbReference type="InterPro" id="IPR008881">
    <property type="entry name" value="Trigger_fac_ribosome-bd_bac"/>
</dbReference>
<dbReference type="InterPro" id="IPR036611">
    <property type="entry name" value="Trigger_fac_ribosome-bd_sf"/>
</dbReference>
<dbReference type="InterPro" id="IPR027304">
    <property type="entry name" value="Trigger_fact/SurA_dom_sf"/>
</dbReference>
<dbReference type="NCBIfam" id="TIGR00115">
    <property type="entry name" value="tig"/>
    <property type="match status" value="1"/>
</dbReference>
<dbReference type="PANTHER" id="PTHR30560">
    <property type="entry name" value="TRIGGER FACTOR CHAPERONE AND PEPTIDYL-PROLYL CIS/TRANS ISOMERASE"/>
    <property type="match status" value="1"/>
</dbReference>
<dbReference type="PANTHER" id="PTHR30560:SF3">
    <property type="entry name" value="TRIGGER FACTOR-LIKE PROTEIN TIG, CHLOROPLASTIC"/>
    <property type="match status" value="1"/>
</dbReference>
<dbReference type="Pfam" id="PF00254">
    <property type="entry name" value="FKBP_C"/>
    <property type="match status" value="1"/>
</dbReference>
<dbReference type="Pfam" id="PF05698">
    <property type="entry name" value="Trigger_C"/>
    <property type="match status" value="1"/>
</dbReference>
<dbReference type="Pfam" id="PF05697">
    <property type="entry name" value="Trigger_N"/>
    <property type="match status" value="1"/>
</dbReference>
<dbReference type="PIRSF" id="PIRSF003095">
    <property type="entry name" value="Trigger_factor"/>
    <property type="match status" value="1"/>
</dbReference>
<dbReference type="SUPFAM" id="SSF54534">
    <property type="entry name" value="FKBP-like"/>
    <property type="match status" value="1"/>
</dbReference>
<dbReference type="SUPFAM" id="SSF109998">
    <property type="entry name" value="Triger factor/SurA peptide-binding domain-like"/>
    <property type="match status" value="1"/>
</dbReference>
<dbReference type="SUPFAM" id="SSF102735">
    <property type="entry name" value="Trigger factor ribosome-binding domain"/>
    <property type="match status" value="1"/>
</dbReference>
<dbReference type="PROSITE" id="PS50059">
    <property type="entry name" value="FKBP_PPIASE"/>
    <property type="match status" value="1"/>
</dbReference>
<reference key="1">
    <citation type="submission" date="2006-08" db="EMBL/GenBank/DDBJ databases">
        <title>Complete sequence of Shewanella frigidimarina NCIMB 400.</title>
        <authorList>
            <consortium name="US DOE Joint Genome Institute"/>
            <person name="Copeland A."/>
            <person name="Lucas S."/>
            <person name="Lapidus A."/>
            <person name="Barry K."/>
            <person name="Detter J.C."/>
            <person name="Glavina del Rio T."/>
            <person name="Hammon N."/>
            <person name="Israni S."/>
            <person name="Dalin E."/>
            <person name="Tice H."/>
            <person name="Pitluck S."/>
            <person name="Fredrickson J.K."/>
            <person name="Kolker E."/>
            <person name="McCuel L.A."/>
            <person name="DiChristina T."/>
            <person name="Nealson K.H."/>
            <person name="Newman D."/>
            <person name="Tiedje J.M."/>
            <person name="Zhou J."/>
            <person name="Romine M.F."/>
            <person name="Culley D.E."/>
            <person name="Serres M."/>
            <person name="Chertkov O."/>
            <person name="Brettin T."/>
            <person name="Bruce D."/>
            <person name="Han C."/>
            <person name="Tapia R."/>
            <person name="Gilna P."/>
            <person name="Schmutz J."/>
            <person name="Larimer F."/>
            <person name="Land M."/>
            <person name="Hauser L."/>
            <person name="Kyrpides N."/>
            <person name="Mikhailova N."/>
            <person name="Richardson P."/>
        </authorList>
    </citation>
    <scope>NUCLEOTIDE SEQUENCE [LARGE SCALE GENOMIC DNA]</scope>
    <source>
        <strain>NCIMB 400</strain>
    </source>
</reference>
<feature type="chain" id="PRO_1000022755" description="Trigger factor">
    <location>
        <begin position="1"/>
        <end position="434"/>
    </location>
</feature>
<feature type="domain" description="PPIase FKBP-type" evidence="1">
    <location>
        <begin position="160"/>
        <end position="245"/>
    </location>
</feature>
<comment type="function">
    <text evidence="1">Involved in protein export. Acts as a chaperone by maintaining the newly synthesized protein in an open conformation. Functions as a peptidyl-prolyl cis-trans isomerase.</text>
</comment>
<comment type="catalytic activity">
    <reaction evidence="1">
        <text>[protein]-peptidylproline (omega=180) = [protein]-peptidylproline (omega=0)</text>
        <dbReference type="Rhea" id="RHEA:16237"/>
        <dbReference type="Rhea" id="RHEA-COMP:10747"/>
        <dbReference type="Rhea" id="RHEA-COMP:10748"/>
        <dbReference type="ChEBI" id="CHEBI:83833"/>
        <dbReference type="ChEBI" id="CHEBI:83834"/>
        <dbReference type="EC" id="5.2.1.8"/>
    </reaction>
</comment>
<comment type="subcellular location">
    <subcellularLocation>
        <location>Cytoplasm</location>
    </subcellularLocation>
    <text evidence="1">About half TF is bound to the ribosome near the polypeptide exit tunnel while the other half is free in the cytoplasm.</text>
</comment>
<comment type="domain">
    <text evidence="1">Consists of 3 domains; the N-terminus binds the ribosome, the middle domain has PPIase activity, while the C-terminus has intrinsic chaperone activity on its own.</text>
</comment>
<comment type="similarity">
    <text evidence="1">Belongs to the FKBP-type PPIase family. Tig subfamily.</text>
</comment>
<organism>
    <name type="scientific">Shewanella frigidimarina (strain NCIMB 400)</name>
    <dbReference type="NCBI Taxonomy" id="318167"/>
    <lineage>
        <taxon>Bacteria</taxon>
        <taxon>Pseudomonadati</taxon>
        <taxon>Pseudomonadota</taxon>
        <taxon>Gammaproteobacteria</taxon>
        <taxon>Alteromonadales</taxon>
        <taxon>Shewanellaceae</taxon>
        <taxon>Shewanella</taxon>
    </lineage>
</organism>
<name>TIG_SHEFN</name>
<keyword id="KW-0131">Cell cycle</keyword>
<keyword id="KW-0132">Cell division</keyword>
<keyword id="KW-0143">Chaperone</keyword>
<keyword id="KW-0963">Cytoplasm</keyword>
<keyword id="KW-0413">Isomerase</keyword>
<keyword id="KW-1185">Reference proteome</keyword>
<keyword id="KW-0697">Rotamase</keyword>
<gene>
    <name evidence="1" type="primary">tig</name>
    <name type="ordered locus">Sfri_2597</name>
</gene>
<proteinExistence type="inferred from homology"/>
<protein>
    <recommendedName>
        <fullName evidence="1">Trigger factor</fullName>
        <shortName evidence="1">TF</shortName>
        <ecNumber evidence="1">5.2.1.8</ecNumber>
    </recommendedName>
    <alternativeName>
        <fullName evidence="1">PPIase</fullName>
    </alternativeName>
</protein>
<accession>Q07ZX7</accession>
<sequence length="434" mass="47864">MQVSVETTQGLERRLTISVPAEQIEKLVKDNVLREAKRARLPGFRPGKVPIGEINKRYGKAIRQDITGEVMQRNFIEAIVAEKLNPAGAPVFTPGSTEGDSFEFVATFEIYPEVVLTGLDSIAVEQPKAEVNDADVDVMIETLRKQHATFAPVERAAVADDKVKMNFIGSIDGEEFEGGKADDFELQLGSNRMIPGFETGIVGHKTGDEFEIEVTFPEDYHAENLKGKAAKFVITLTEVQAANLPEVNDEFASLFGIAEGGLDALKAEIRKNMTRELEQALKANVKEQVITGLLAANDIAIPKALVEGEVNVLRQQAMQRFGGQTENMPELPAELFTEQAERRVKIGLLLGEVIKTNELKAEDDRVNTLIESMASAYEDPSEVVSYYNSNKELMQNMRNVALEEQAVEALLKSSKVTVKDVAFEEFMNKATGRA</sequence>